<keyword id="KW-0028">Amino-acid biosynthesis</keyword>
<keyword id="KW-0963">Cytoplasm</keyword>
<keyword id="KW-0368">Histidine biosynthesis</keyword>
<keyword id="KW-0456">Lyase</keyword>
<proteinExistence type="inferred from homology"/>
<comment type="function">
    <text evidence="1">IGPS catalyzes the conversion of PRFAR and glutamine to IGP, AICAR and glutamate. The HisF subunit catalyzes the cyclization activity that produces IGP and AICAR from PRFAR using the ammonia provided by the HisH subunit.</text>
</comment>
<comment type="catalytic activity">
    <reaction evidence="1">
        <text>5-[(5-phospho-1-deoxy-D-ribulos-1-ylimino)methylamino]-1-(5-phospho-beta-D-ribosyl)imidazole-4-carboxamide + L-glutamine = D-erythro-1-(imidazol-4-yl)glycerol 3-phosphate + 5-amino-1-(5-phospho-beta-D-ribosyl)imidazole-4-carboxamide + L-glutamate + H(+)</text>
        <dbReference type="Rhea" id="RHEA:24793"/>
        <dbReference type="ChEBI" id="CHEBI:15378"/>
        <dbReference type="ChEBI" id="CHEBI:29985"/>
        <dbReference type="ChEBI" id="CHEBI:58278"/>
        <dbReference type="ChEBI" id="CHEBI:58359"/>
        <dbReference type="ChEBI" id="CHEBI:58475"/>
        <dbReference type="ChEBI" id="CHEBI:58525"/>
        <dbReference type="EC" id="4.3.2.10"/>
    </reaction>
</comment>
<comment type="pathway">
    <text evidence="1">Amino-acid biosynthesis; L-histidine biosynthesis; L-histidine from 5-phospho-alpha-D-ribose 1-diphosphate: step 5/9.</text>
</comment>
<comment type="subunit">
    <text evidence="1">Heterodimer of HisH and HisF.</text>
</comment>
<comment type="subcellular location">
    <subcellularLocation>
        <location evidence="1">Cytoplasm</location>
    </subcellularLocation>
</comment>
<comment type="similarity">
    <text evidence="1">Belongs to the HisA/HisF family.</text>
</comment>
<name>HIS6_ACTP7</name>
<sequence length="257" mass="28649">MLAKRIIPCLDVRDGQVVKGVQFRNHEIIGDIVPLAKRYAEEGADELVFYDITASSDGRTVDKSWVERVAQVIDIPFCVAGGIKTIEDAEKLFAFGADKISINSPALADPNLITALADRFGVQAVVVGIDSWFEKETGKYWVNQYTGDEKRTRQTNWQLLDWVQEVQKRGAGEIVLNMMNQDGVRNGYDLTQLKLVREVCNVPLIASGGAGEMVHFRDAFTQANVDGALAASVFHKRIIEIGELKEYLYAEGVEIRR</sequence>
<organism>
    <name type="scientific">Actinobacillus pleuropneumoniae serotype 7 (strain AP76)</name>
    <dbReference type="NCBI Taxonomy" id="537457"/>
    <lineage>
        <taxon>Bacteria</taxon>
        <taxon>Pseudomonadati</taxon>
        <taxon>Pseudomonadota</taxon>
        <taxon>Gammaproteobacteria</taxon>
        <taxon>Pasteurellales</taxon>
        <taxon>Pasteurellaceae</taxon>
        <taxon>Actinobacillus</taxon>
    </lineage>
</organism>
<gene>
    <name evidence="1" type="primary">hisF</name>
    <name type="ordered locus">APP7_2114</name>
</gene>
<feature type="chain" id="PRO_1000134958" description="Imidazole glycerol phosphate synthase subunit HisF">
    <location>
        <begin position="1"/>
        <end position="257"/>
    </location>
</feature>
<feature type="active site" evidence="1">
    <location>
        <position position="11"/>
    </location>
</feature>
<feature type="active site" evidence="1">
    <location>
        <position position="130"/>
    </location>
</feature>
<accession>B3GZH3</accession>
<dbReference type="EC" id="4.3.2.10" evidence="1"/>
<dbReference type="EMBL" id="CP001091">
    <property type="protein sequence ID" value="ACE62766.1"/>
    <property type="molecule type" value="Genomic_DNA"/>
</dbReference>
<dbReference type="RefSeq" id="WP_005599872.1">
    <property type="nucleotide sequence ID" value="NC_010939.1"/>
</dbReference>
<dbReference type="SMR" id="B3GZH3"/>
<dbReference type="GeneID" id="48600329"/>
<dbReference type="KEGG" id="apa:APP7_2114"/>
<dbReference type="HOGENOM" id="CLU_048577_4_0_6"/>
<dbReference type="UniPathway" id="UPA00031">
    <property type="reaction ID" value="UER00010"/>
</dbReference>
<dbReference type="Proteomes" id="UP000001226">
    <property type="component" value="Chromosome"/>
</dbReference>
<dbReference type="GO" id="GO:0005737">
    <property type="term" value="C:cytoplasm"/>
    <property type="evidence" value="ECO:0007669"/>
    <property type="project" value="UniProtKB-SubCell"/>
</dbReference>
<dbReference type="GO" id="GO:0000107">
    <property type="term" value="F:imidazoleglycerol-phosphate synthase activity"/>
    <property type="evidence" value="ECO:0007669"/>
    <property type="project" value="UniProtKB-UniRule"/>
</dbReference>
<dbReference type="GO" id="GO:0016829">
    <property type="term" value="F:lyase activity"/>
    <property type="evidence" value="ECO:0007669"/>
    <property type="project" value="UniProtKB-KW"/>
</dbReference>
<dbReference type="GO" id="GO:0000105">
    <property type="term" value="P:L-histidine biosynthetic process"/>
    <property type="evidence" value="ECO:0007669"/>
    <property type="project" value="UniProtKB-UniRule"/>
</dbReference>
<dbReference type="CDD" id="cd04731">
    <property type="entry name" value="HisF"/>
    <property type="match status" value="1"/>
</dbReference>
<dbReference type="FunFam" id="3.20.20.70:FF:000006">
    <property type="entry name" value="Imidazole glycerol phosphate synthase subunit HisF"/>
    <property type="match status" value="1"/>
</dbReference>
<dbReference type="Gene3D" id="3.20.20.70">
    <property type="entry name" value="Aldolase class I"/>
    <property type="match status" value="1"/>
</dbReference>
<dbReference type="HAMAP" id="MF_01013">
    <property type="entry name" value="HisF"/>
    <property type="match status" value="1"/>
</dbReference>
<dbReference type="InterPro" id="IPR013785">
    <property type="entry name" value="Aldolase_TIM"/>
</dbReference>
<dbReference type="InterPro" id="IPR006062">
    <property type="entry name" value="His_biosynth"/>
</dbReference>
<dbReference type="InterPro" id="IPR004651">
    <property type="entry name" value="HisF"/>
</dbReference>
<dbReference type="InterPro" id="IPR050064">
    <property type="entry name" value="IGPS_HisA/HisF"/>
</dbReference>
<dbReference type="InterPro" id="IPR011060">
    <property type="entry name" value="RibuloseP-bd_barrel"/>
</dbReference>
<dbReference type="NCBIfam" id="TIGR00735">
    <property type="entry name" value="hisF"/>
    <property type="match status" value="1"/>
</dbReference>
<dbReference type="PANTHER" id="PTHR21235:SF2">
    <property type="entry name" value="IMIDAZOLE GLYCEROL PHOSPHATE SYNTHASE HISHF"/>
    <property type="match status" value="1"/>
</dbReference>
<dbReference type="PANTHER" id="PTHR21235">
    <property type="entry name" value="IMIDAZOLE GLYCEROL PHOSPHATE SYNTHASE SUBUNIT HISF/H IGP SYNTHASE SUBUNIT HISF/H"/>
    <property type="match status" value="1"/>
</dbReference>
<dbReference type="Pfam" id="PF00977">
    <property type="entry name" value="His_biosynth"/>
    <property type="match status" value="1"/>
</dbReference>
<dbReference type="SUPFAM" id="SSF51366">
    <property type="entry name" value="Ribulose-phoshate binding barrel"/>
    <property type="match status" value="1"/>
</dbReference>
<protein>
    <recommendedName>
        <fullName evidence="1">Imidazole glycerol phosphate synthase subunit HisF</fullName>
        <ecNumber evidence="1">4.3.2.10</ecNumber>
    </recommendedName>
    <alternativeName>
        <fullName evidence="1">IGP synthase cyclase subunit</fullName>
    </alternativeName>
    <alternativeName>
        <fullName evidence="1">IGP synthase subunit HisF</fullName>
    </alternativeName>
    <alternativeName>
        <fullName evidence="1">ImGP synthase subunit HisF</fullName>
        <shortName evidence="1">IGPS subunit HisF</shortName>
    </alternativeName>
</protein>
<evidence type="ECO:0000255" key="1">
    <source>
        <dbReference type="HAMAP-Rule" id="MF_01013"/>
    </source>
</evidence>
<reference key="1">
    <citation type="submission" date="2008-06" db="EMBL/GenBank/DDBJ databases">
        <title>Genome and proteome analysis of A. pleuropneumoniae serotype 7.</title>
        <authorList>
            <person name="Linke B."/>
            <person name="Buettner F."/>
            <person name="Martinez-Arias R."/>
            <person name="Goesmann A."/>
            <person name="Baltes N."/>
            <person name="Tegetmeyer H."/>
            <person name="Singh M."/>
            <person name="Gerlach G.F."/>
        </authorList>
    </citation>
    <scope>NUCLEOTIDE SEQUENCE [LARGE SCALE GENOMIC DNA]</scope>
    <source>
        <strain>AP76</strain>
    </source>
</reference>